<comment type="function">
    <text evidence="2 3 4 5 8 9">Male seminal protein which triggers short- and long-term post-mating behavioral responses (PMR) in female Drosophila (PubMed:15694303, PubMed:19249273, PubMed:19793753, PubMed:20308537, PubMed:24089336, PubMed:3135120). Binds initially to sperm where it is later cleaved to release an active peptide within the female reproductive tract. Signals via the sex peptide receptor (SPR) in female flies; may also act via other receptors (PubMed:20308537, PubMed:20458515, PubMed:24089336). Moderates the activity of distinct neuronal circuitries in the female genital tract to promote specific PMRs including: enhanced ovulation, increased egg laying rate, increased feeding/foraging rate, induced antimicrobial peptide synthesis, reduced mating receptivity, reduced day-time sleep and reduced lifespan in multiple mated females (PubMed:15694303, PubMed:19249273, PubMed:19793753, PubMed:24089336, PubMed:3135120).</text>
</comment>
<comment type="subcellular location">
    <subcellularLocation>
        <location evidence="9">Secreted</location>
    </subcellularLocation>
</comment>
<comment type="tissue specificity">
    <text evidence="6 9">Main cells of the accessory glands of males (paragonial gland).</text>
</comment>
<comment type="developmental stage">
    <text evidence="6 9">No expression in females or embryos (PubMed:20458515, PubMed:3135120). Expression levels are highest in male adults with little to no expression until the late pupal stages (PubMed:20458515, PubMed:3135120).</text>
</comment>
<comment type="PTM">
    <text evidence="2">Sperm-bound protein is cleaved to release an active C-terminal peptide. Gradual release from stored sperm may function to prolong PMR and enhance male reproductive success.</text>
</comment>
<comment type="disruption phenotype">
    <text evidence="1 4">Viable and fertile (PubMed:19793753). Males are able to transfer sperm but can only induce weak PMR behaviors in females (PubMed:12897240, PubMed:19793753).</text>
</comment>
<comment type="similarity">
    <text evidence="10">Belongs to the Drosophila sex peptide family.</text>
</comment>
<reference key="1">
    <citation type="journal article" date="1988" name="Cell">
        <title>A male accessory gland peptide that regulates reproductive behavior of female D. melanogaster.</title>
        <authorList>
            <person name="Chen P.S."/>
            <person name="Stumm-Zollinger E."/>
            <person name="Aigaki T."/>
            <person name="Balmer J."/>
            <person name="Bienz M."/>
            <person name="Boehlen P."/>
        </authorList>
    </citation>
    <scope>NUCLEOTIDE SEQUENCE [MRNA]</scope>
    <scope>PROTEIN SEQUENCE OF 20-55</scope>
    <scope>FUNCTION</scope>
    <scope>SUBCELLULAR LOCATION</scope>
    <scope>HYDROXYLATION AT PRO-28; PRO-32; PRO-34; PRO-36 AND PRO-38</scope>
    <scope>TISSUE SPECIFICITY</scope>
    <scope>DEVELOPMENTAL STAGE</scope>
</reference>
<reference key="2">
    <citation type="journal article" date="1997" name="Genetics">
        <title>Evolutionary history of the sex-peptide (Acp70A) gene region in Drosophila melanogaster.</title>
        <authorList>
            <person name="Cirera S."/>
            <person name="Aguade M.N."/>
        </authorList>
    </citation>
    <scope>NUCLEOTIDE SEQUENCE [GENOMIC DNA]</scope>
    <source>
        <strain>M11</strain>
        <strain>M2</strain>
        <strain>M26</strain>
        <strain>M36</strain>
        <strain>M40</strain>
        <strain>M47</strain>
        <strain>M54</strain>
        <strain>M55</strain>
        <strain>M66</strain>
    </source>
</reference>
<reference key="3">
    <citation type="journal article" date="2003" name="Evolution">
        <title>Population genetics of accessory gland proteins and sexual behavior in Drosophila melanogaster populations from Evolution Canyon.</title>
        <authorList>
            <person name="Panhuis T.M."/>
            <person name="Swanson W.J."/>
            <person name="Nunney L."/>
        </authorList>
    </citation>
    <scope>NUCLEOTIDE SEQUENCE [GENOMIC DNA]</scope>
    <source>
        <strain>NFS 5.1</strain>
        <strain>NFS 5.2</strain>
        <strain>NFS 5.3</strain>
        <strain>NFS 5.4</strain>
        <strain>NFS 6.1</strain>
        <strain>NFS 6.2</strain>
        <strain>NFS 6.3</strain>
        <strain>NFS 6.4</strain>
        <strain>NFS 7.8</strain>
        <strain>SFS 1.1</strain>
        <strain>SFS 1.2</strain>
        <strain>SFS 1.3</strain>
        <strain>SFS 1.4</strain>
        <strain>SFS 2.2</strain>
        <strain>SFS 2.3</strain>
        <strain>SFS 2.4</strain>
        <strain>SFS 3.1</strain>
        <strain>SFS 3.2</strain>
        <strain>SFS 3.3</strain>
        <strain>SFS 3.4</strain>
    </source>
</reference>
<reference key="4">
    <citation type="journal article" date="2000" name="Science">
        <title>The genome sequence of Drosophila melanogaster.</title>
        <authorList>
            <person name="Adams M.D."/>
            <person name="Celniker S.E."/>
            <person name="Holt R.A."/>
            <person name="Evans C.A."/>
            <person name="Gocayne J.D."/>
            <person name="Amanatides P.G."/>
            <person name="Scherer S.E."/>
            <person name="Li P.W."/>
            <person name="Hoskins R.A."/>
            <person name="Galle R.F."/>
            <person name="George R.A."/>
            <person name="Lewis S.E."/>
            <person name="Richards S."/>
            <person name="Ashburner M."/>
            <person name="Henderson S.N."/>
            <person name="Sutton G.G."/>
            <person name="Wortman J.R."/>
            <person name="Yandell M.D."/>
            <person name="Zhang Q."/>
            <person name="Chen L.X."/>
            <person name="Brandon R.C."/>
            <person name="Rogers Y.-H.C."/>
            <person name="Blazej R.G."/>
            <person name="Champe M."/>
            <person name="Pfeiffer B.D."/>
            <person name="Wan K.H."/>
            <person name="Doyle C."/>
            <person name="Baxter E.G."/>
            <person name="Helt G."/>
            <person name="Nelson C.R."/>
            <person name="Miklos G.L.G."/>
            <person name="Abril J.F."/>
            <person name="Agbayani A."/>
            <person name="An H.-J."/>
            <person name="Andrews-Pfannkoch C."/>
            <person name="Baldwin D."/>
            <person name="Ballew R.M."/>
            <person name="Basu A."/>
            <person name="Baxendale J."/>
            <person name="Bayraktaroglu L."/>
            <person name="Beasley E.M."/>
            <person name="Beeson K.Y."/>
            <person name="Benos P.V."/>
            <person name="Berman B.P."/>
            <person name="Bhandari D."/>
            <person name="Bolshakov S."/>
            <person name="Borkova D."/>
            <person name="Botchan M.R."/>
            <person name="Bouck J."/>
            <person name="Brokstein P."/>
            <person name="Brottier P."/>
            <person name="Burtis K.C."/>
            <person name="Busam D.A."/>
            <person name="Butler H."/>
            <person name="Cadieu E."/>
            <person name="Center A."/>
            <person name="Chandra I."/>
            <person name="Cherry J.M."/>
            <person name="Cawley S."/>
            <person name="Dahlke C."/>
            <person name="Davenport L.B."/>
            <person name="Davies P."/>
            <person name="de Pablos B."/>
            <person name="Delcher A."/>
            <person name="Deng Z."/>
            <person name="Mays A.D."/>
            <person name="Dew I."/>
            <person name="Dietz S.M."/>
            <person name="Dodson K."/>
            <person name="Doup L.E."/>
            <person name="Downes M."/>
            <person name="Dugan-Rocha S."/>
            <person name="Dunkov B.C."/>
            <person name="Dunn P."/>
            <person name="Durbin K.J."/>
            <person name="Evangelista C.C."/>
            <person name="Ferraz C."/>
            <person name="Ferriera S."/>
            <person name="Fleischmann W."/>
            <person name="Fosler C."/>
            <person name="Gabrielian A.E."/>
            <person name="Garg N.S."/>
            <person name="Gelbart W.M."/>
            <person name="Glasser K."/>
            <person name="Glodek A."/>
            <person name="Gong F."/>
            <person name="Gorrell J.H."/>
            <person name="Gu Z."/>
            <person name="Guan P."/>
            <person name="Harris M."/>
            <person name="Harris N.L."/>
            <person name="Harvey D.A."/>
            <person name="Heiman T.J."/>
            <person name="Hernandez J.R."/>
            <person name="Houck J."/>
            <person name="Hostin D."/>
            <person name="Houston K.A."/>
            <person name="Howland T.J."/>
            <person name="Wei M.-H."/>
            <person name="Ibegwam C."/>
            <person name="Jalali M."/>
            <person name="Kalush F."/>
            <person name="Karpen G.H."/>
            <person name="Ke Z."/>
            <person name="Kennison J.A."/>
            <person name="Ketchum K.A."/>
            <person name="Kimmel B.E."/>
            <person name="Kodira C.D."/>
            <person name="Kraft C.L."/>
            <person name="Kravitz S."/>
            <person name="Kulp D."/>
            <person name="Lai Z."/>
            <person name="Lasko P."/>
            <person name="Lei Y."/>
            <person name="Levitsky A.A."/>
            <person name="Li J.H."/>
            <person name="Li Z."/>
            <person name="Liang Y."/>
            <person name="Lin X."/>
            <person name="Liu X."/>
            <person name="Mattei B."/>
            <person name="McIntosh T.C."/>
            <person name="McLeod M.P."/>
            <person name="McPherson D."/>
            <person name="Merkulov G."/>
            <person name="Milshina N.V."/>
            <person name="Mobarry C."/>
            <person name="Morris J."/>
            <person name="Moshrefi A."/>
            <person name="Mount S.M."/>
            <person name="Moy M."/>
            <person name="Murphy B."/>
            <person name="Murphy L."/>
            <person name="Muzny D.M."/>
            <person name="Nelson D.L."/>
            <person name="Nelson D.R."/>
            <person name="Nelson K.A."/>
            <person name="Nixon K."/>
            <person name="Nusskern D.R."/>
            <person name="Pacleb J.M."/>
            <person name="Palazzolo M."/>
            <person name="Pittman G.S."/>
            <person name="Pan S."/>
            <person name="Pollard J."/>
            <person name="Puri V."/>
            <person name="Reese M.G."/>
            <person name="Reinert K."/>
            <person name="Remington K."/>
            <person name="Saunders R.D.C."/>
            <person name="Scheeler F."/>
            <person name="Shen H."/>
            <person name="Shue B.C."/>
            <person name="Siden-Kiamos I."/>
            <person name="Simpson M."/>
            <person name="Skupski M.P."/>
            <person name="Smith T.J."/>
            <person name="Spier E."/>
            <person name="Spradling A.C."/>
            <person name="Stapleton M."/>
            <person name="Strong R."/>
            <person name="Sun E."/>
            <person name="Svirskas R."/>
            <person name="Tector C."/>
            <person name="Turner R."/>
            <person name="Venter E."/>
            <person name="Wang A.H."/>
            <person name="Wang X."/>
            <person name="Wang Z.-Y."/>
            <person name="Wassarman D.A."/>
            <person name="Weinstock G.M."/>
            <person name="Weissenbach J."/>
            <person name="Williams S.M."/>
            <person name="Woodage T."/>
            <person name="Worley K.C."/>
            <person name="Wu D."/>
            <person name="Yang S."/>
            <person name="Yao Q.A."/>
            <person name="Ye J."/>
            <person name="Yeh R.-F."/>
            <person name="Zaveri J.S."/>
            <person name="Zhan M."/>
            <person name="Zhang G."/>
            <person name="Zhao Q."/>
            <person name="Zheng L."/>
            <person name="Zheng X.H."/>
            <person name="Zhong F.N."/>
            <person name="Zhong W."/>
            <person name="Zhou X."/>
            <person name="Zhu S.C."/>
            <person name="Zhu X."/>
            <person name="Smith H.O."/>
            <person name="Gibbs R.A."/>
            <person name="Myers E.W."/>
            <person name="Rubin G.M."/>
            <person name="Venter J.C."/>
        </authorList>
    </citation>
    <scope>NUCLEOTIDE SEQUENCE [LARGE SCALE GENOMIC DNA]</scope>
    <source>
        <strain>Berkeley</strain>
    </source>
</reference>
<reference key="5">
    <citation type="journal article" date="2002" name="Genome Biol.">
        <title>Annotation of the Drosophila melanogaster euchromatic genome: a systematic review.</title>
        <authorList>
            <person name="Misra S."/>
            <person name="Crosby M.A."/>
            <person name="Mungall C.J."/>
            <person name="Matthews B.B."/>
            <person name="Campbell K.S."/>
            <person name="Hradecky P."/>
            <person name="Huang Y."/>
            <person name="Kaminker J.S."/>
            <person name="Millburn G.H."/>
            <person name="Prochnik S.E."/>
            <person name="Smith C.D."/>
            <person name="Tupy J.L."/>
            <person name="Whitfield E.J."/>
            <person name="Bayraktaroglu L."/>
            <person name="Berman B.P."/>
            <person name="Bettencourt B.R."/>
            <person name="Celniker S.E."/>
            <person name="de Grey A.D.N.J."/>
            <person name="Drysdale R.A."/>
            <person name="Harris N.L."/>
            <person name="Richter J."/>
            <person name="Russo S."/>
            <person name="Schroeder A.J."/>
            <person name="Shu S.Q."/>
            <person name="Stapleton M."/>
            <person name="Yamada C."/>
            <person name="Ashburner M."/>
            <person name="Gelbart W.M."/>
            <person name="Rubin G.M."/>
            <person name="Lewis S.E."/>
        </authorList>
    </citation>
    <scope>GENOME REANNOTATION</scope>
    <source>
        <strain>Berkeley</strain>
    </source>
</reference>
<reference key="6">
    <citation type="journal article" date="2003" name="Proc. Natl. Acad. Sci. U.S.A.">
        <title>Sex-peptide is the molecular basis of the sperm effect in Drosophila melanogaster.</title>
        <authorList>
            <person name="Liu H."/>
            <person name="Kubli E."/>
        </authorList>
    </citation>
    <scope>DISRUPTION PHENOTYPE</scope>
</reference>
<reference key="7">
    <citation type="journal article" date="2005" name="Curr. Biol.">
        <title>Gradual release of sperm bound sex-peptide controls female postmating behavior in Drosophila.</title>
        <authorList>
            <person name="Peng J."/>
            <person name="Chen S."/>
            <person name="Busser S."/>
            <person name="Liu H."/>
            <person name="Honegger T."/>
            <person name="Kubli E."/>
        </authorList>
    </citation>
    <scope>FUNCTION</scope>
    <scope>DOMAIN</scope>
    <scope>CLEAVAGE</scope>
    <scope>MUTAGENESIS OF 26-ARG-LYS-27</scope>
</reference>
<reference key="8">
    <citation type="journal article" date="2009" name="Neuron">
        <title>Control of the postmating behavioral switch in Drosophila females by internal sensory neurons.</title>
        <authorList>
            <person name="Yang C.H."/>
            <person name="Rumpf S."/>
            <person name="Xiang Y."/>
            <person name="Gordon M.D."/>
            <person name="Song W."/>
            <person name="Jan L.Y."/>
            <person name="Jan Y.N."/>
        </authorList>
    </citation>
    <scope>FUNCTION</scope>
</reference>
<reference key="9">
    <citation type="journal article" date="2010" name="Cell. Mol. Life Sci.">
        <title>Myoinhibiting peptides are the ancestral ligands of the promiscuous Drosophila sex peptide receptor.</title>
        <authorList>
            <person name="Poels J."/>
            <person name="Van Loy T."/>
            <person name="Vandersmissen H.P."/>
            <person name="Van Hiel B."/>
            <person name="Van Soest S."/>
            <person name="Nachman R.J."/>
            <person name="Vanden Broeck J."/>
        </authorList>
    </citation>
    <scope>FUNCTION</scope>
    <scope>TISSUE SPECIFICITY</scope>
    <scope>DEVELOPMENTAL STAGE</scope>
</reference>
<reference key="10">
    <citation type="journal article" date="2010" name="Proc. Natl. Acad. Sci. U.S.A.">
        <title>MIPs are ancestral ligands for the sex peptide receptor.</title>
        <authorList>
            <person name="Kim Y.J."/>
            <person name="Bartalska K."/>
            <person name="Audsley N."/>
            <person name="Yamanaka N."/>
            <person name="Yapici N."/>
            <person name="Lee J.Y."/>
            <person name="Kim Y.C."/>
            <person name="Markovic M."/>
            <person name="Isaac E."/>
            <person name="Tanaka Y."/>
            <person name="Dickson B.J."/>
        </authorList>
    </citation>
    <scope>FUNCTION</scope>
    <scope>MUTAGENESIS OF TRP-42; CYS-43; TRP-51 AND CYS-55</scope>
    <scope>SYNTHESIS OF 40-55</scope>
</reference>
<reference key="11">
    <citation type="journal article" date="2010" name="Proc. R. Soc. Lond., B, Biol. Sci.">
        <title>Drosophila male sex peptide inhibits siesta sleep and promotes locomotor activity in the post-mated female.</title>
        <authorList>
            <person name="Isaac R.E."/>
            <person name="Li C."/>
            <person name="Leedale A.E."/>
            <person name="Shirras A.D."/>
        </authorList>
    </citation>
    <scope>FUNCTION</scope>
    <scope>DISRUPTION PHENOTYPE</scope>
</reference>
<reference key="12">
    <citation type="journal article" date="2013" name="Proc. R. Soc. Lond., B, Biol. Sci.">
        <title>Multiple pathways mediate the sex-peptide-regulated switch in female Drosophila reproductive behaviours.</title>
        <authorList>
            <person name="Haussmann I.U."/>
            <person name="Hemani Y."/>
            <person name="Wijesekera T."/>
            <person name="Dauwalder B."/>
            <person name="Soller M."/>
        </authorList>
    </citation>
    <scope>FUNCTION</scope>
    <scope>DOMAIN</scope>
</reference>
<reference key="13">
    <citation type="journal article" date="2011" name="FEBS Lett.">
        <title>NMR studies of the solution conformation of the sex peptide from Drosophila melanogaster.</title>
        <authorList>
            <person name="Moehle K."/>
            <person name="Freund A."/>
            <person name="Kubli E."/>
            <person name="Robinson J.A."/>
        </authorList>
    </citation>
    <scope>STRUCTURE BY NMR OF 20-55</scope>
    <scope>DISULFIDE BOND</scope>
</reference>
<evidence type="ECO:0000269" key="1">
    <source>
    </source>
</evidence>
<evidence type="ECO:0000269" key="2">
    <source>
    </source>
</evidence>
<evidence type="ECO:0000269" key="3">
    <source>
    </source>
</evidence>
<evidence type="ECO:0000269" key="4">
    <source>
    </source>
</evidence>
<evidence type="ECO:0000269" key="5">
    <source>
    </source>
</evidence>
<evidence type="ECO:0000269" key="6">
    <source>
    </source>
</evidence>
<evidence type="ECO:0000269" key="7">
    <source>
    </source>
</evidence>
<evidence type="ECO:0000269" key="8">
    <source>
    </source>
</evidence>
<evidence type="ECO:0000269" key="9">
    <source>
    </source>
</evidence>
<evidence type="ECO:0000305" key="10"/>
<evidence type="ECO:0007829" key="11">
    <source>
        <dbReference type="PDB" id="2LAQ"/>
    </source>
</evidence>
<keyword id="KW-0002">3D-structure</keyword>
<keyword id="KW-0085">Behavior</keyword>
<keyword id="KW-0165">Cleavage on pair of basic residues</keyword>
<keyword id="KW-0903">Direct protein sequencing</keyword>
<keyword id="KW-1015">Disulfide bond</keyword>
<keyword id="KW-0379">Hydroxylation</keyword>
<keyword id="KW-1185">Reference proteome</keyword>
<keyword id="KW-0964">Secreted</keyword>
<keyword id="KW-0732">Signal</keyword>
<organism>
    <name type="scientific">Drosophila melanogaster</name>
    <name type="common">Fruit fly</name>
    <dbReference type="NCBI Taxonomy" id="7227"/>
    <lineage>
        <taxon>Eukaryota</taxon>
        <taxon>Metazoa</taxon>
        <taxon>Ecdysozoa</taxon>
        <taxon>Arthropoda</taxon>
        <taxon>Hexapoda</taxon>
        <taxon>Insecta</taxon>
        <taxon>Pterygota</taxon>
        <taxon>Neoptera</taxon>
        <taxon>Endopterygota</taxon>
        <taxon>Diptera</taxon>
        <taxon>Brachycera</taxon>
        <taxon>Muscomorpha</taxon>
        <taxon>Ephydroidea</taxon>
        <taxon>Drosophilidae</taxon>
        <taxon>Drosophila</taxon>
        <taxon>Sophophora</taxon>
    </lineage>
</organism>
<gene>
    <name type="primary">SP</name>
    <name type="synonym">Acp70A</name>
    <name type="synonym">PAPB</name>
    <name type="ORF">CG17673</name>
</gene>
<feature type="signal peptide" evidence="9">
    <location>
        <begin position="1"/>
        <end position="19"/>
    </location>
</feature>
<feature type="chain" id="PRO_0000020587" description="Accessory gland-specific peptide 70A">
    <location>
        <begin position="20"/>
        <end position="55"/>
    </location>
</feature>
<feature type="region of interest" description="Essential for binding to sperm" evidence="2">
    <location>
        <begin position="20"/>
        <end position="33"/>
    </location>
</feature>
<feature type="region of interest" description="Sufficient to induce PMR" evidence="8">
    <location>
        <begin position="36"/>
        <end position="55"/>
    </location>
</feature>
<feature type="site" description="Cleavage" evidence="2">
    <location>
        <begin position="26"/>
        <end position="27"/>
    </location>
</feature>
<feature type="modified residue" description="Hydroxyproline" evidence="9">
    <location>
        <position position="28"/>
    </location>
</feature>
<feature type="modified residue" description="Hydroxyproline" evidence="9">
    <location>
        <position position="32"/>
    </location>
</feature>
<feature type="modified residue" description="Isoleucine derivative">
    <location>
        <position position="33"/>
    </location>
</feature>
<feature type="modified residue" description="Hydroxyproline" evidence="9">
    <location>
        <position position="34"/>
    </location>
</feature>
<feature type="modified residue" description="Hydroxyproline" evidence="9">
    <location>
        <position position="36"/>
    </location>
</feature>
<feature type="modified residue" description="Hydroxyproline" evidence="9">
    <location>
        <position position="38"/>
    </location>
</feature>
<feature type="disulfide bond" evidence="7">
    <location>
        <begin position="43"/>
        <end position="55"/>
    </location>
</feature>
<feature type="sequence variant" description="In strain: Berkeley, M2, M26, M36, M40, M55 and SFS 3.4.">
    <original>S</original>
    <variation>A</variation>
    <location>
        <position position="19"/>
    </location>
</feature>
<feature type="sequence variant" description="In strain: SFS 3.4.">
    <original>N</original>
    <variation>I</variation>
    <location>
        <position position="46"/>
    </location>
</feature>
<feature type="mutagenesis site" description="Abolishes cleavage from sperm and prevents release of C-terminal fragment for long-term PMR. Short-term PMR in unaffected." evidence="2">
    <original>RK</original>
    <variation>QQ</variation>
    <location>
        <begin position="26"/>
        <end position="27"/>
    </location>
</feature>
<feature type="mutagenesis site" description="Complete loss of activity; when associated with A-51. Complete loss of activity; when associated with A-43; A-51 and A-55." evidence="5">
    <original>W</original>
    <variation>A</variation>
    <location>
        <position position="42"/>
    </location>
</feature>
<feature type="mutagenesis site" description="Complete loss of activity; when associated with A-42; A-51 and A-55." evidence="5">
    <original>C</original>
    <variation>A</variation>
    <location>
        <position position="43"/>
    </location>
</feature>
<feature type="mutagenesis site" description="Complete loss of activity; when associated with A-42. Complete loss of activity; when associated with A-42; A-43 and A-55." evidence="5">
    <original>W</original>
    <variation>A</variation>
    <location>
        <position position="51"/>
    </location>
</feature>
<feature type="mutagenesis site" description="Complete loss of activity; when associated with A-42; A-43 and A-51." evidence="5">
    <original>C</original>
    <variation>A</variation>
    <location>
        <position position="55"/>
    </location>
</feature>
<feature type="strand" evidence="11">
    <location>
        <begin position="32"/>
        <end position="35"/>
    </location>
</feature>
<dbReference type="EMBL" id="M21201">
    <property type="protein sequence ID" value="AAA28816.1"/>
    <property type="molecule type" value="mRNA"/>
</dbReference>
<dbReference type="EMBL" id="X99407">
    <property type="protein sequence ID" value="CAA67784.1"/>
    <property type="molecule type" value="Genomic_DNA"/>
</dbReference>
<dbReference type="EMBL" id="X99408">
    <property type="protein sequence ID" value="CAA67785.1"/>
    <property type="molecule type" value="Genomic_DNA"/>
</dbReference>
<dbReference type="EMBL" id="X99409">
    <property type="protein sequence ID" value="CAA67786.1"/>
    <property type="molecule type" value="Genomic_DNA"/>
</dbReference>
<dbReference type="EMBL" id="X99410">
    <property type="protein sequence ID" value="CAA67787.1"/>
    <property type="molecule type" value="Genomic_DNA"/>
</dbReference>
<dbReference type="EMBL" id="X99411">
    <property type="protein sequence ID" value="CAA67788.1"/>
    <property type="molecule type" value="Genomic_DNA"/>
</dbReference>
<dbReference type="EMBL" id="X99413">
    <property type="protein sequence ID" value="CAA67790.1"/>
    <property type="molecule type" value="Genomic_DNA"/>
</dbReference>
<dbReference type="EMBL" id="X99415">
    <property type="protein sequence ID" value="CAA67792.1"/>
    <property type="molecule type" value="Genomic_DNA"/>
</dbReference>
<dbReference type="EMBL" id="X99416">
    <property type="protein sequence ID" value="CAA67793.1"/>
    <property type="molecule type" value="Genomic_DNA"/>
</dbReference>
<dbReference type="EMBL" id="X99418">
    <property type="protein sequence ID" value="CAA67795.1"/>
    <property type="molecule type" value="Genomic_DNA"/>
</dbReference>
<dbReference type="EMBL" id="AY344285">
    <property type="protein sequence ID" value="AAR04600.1"/>
    <property type="molecule type" value="Genomic_DNA"/>
</dbReference>
<dbReference type="EMBL" id="AY344286">
    <property type="protein sequence ID" value="AAR04601.1"/>
    <property type="molecule type" value="Genomic_DNA"/>
</dbReference>
<dbReference type="EMBL" id="AY344287">
    <property type="protein sequence ID" value="AAR04602.1"/>
    <property type="molecule type" value="Genomic_DNA"/>
</dbReference>
<dbReference type="EMBL" id="AY344288">
    <property type="protein sequence ID" value="AAR04603.1"/>
    <property type="molecule type" value="Genomic_DNA"/>
</dbReference>
<dbReference type="EMBL" id="AY344289">
    <property type="protein sequence ID" value="AAR04604.1"/>
    <property type="molecule type" value="Genomic_DNA"/>
</dbReference>
<dbReference type="EMBL" id="AY344290">
    <property type="protein sequence ID" value="AAR04605.1"/>
    <property type="molecule type" value="Genomic_DNA"/>
</dbReference>
<dbReference type="EMBL" id="AY344291">
    <property type="protein sequence ID" value="AAR04606.1"/>
    <property type="molecule type" value="Genomic_DNA"/>
</dbReference>
<dbReference type="EMBL" id="AY344292">
    <property type="protein sequence ID" value="AAR04607.1"/>
    <property type="molecule type" value="Genomic_DNA"/>
</dbReference>
<dbReference type="EMBL" id="AY344293">
    <property type="protein sequence ID" value="AAR04608.1"/>
    <property type="molecule type" value="Genomic_DNA"/>
</dbReference>
<dbReference type="EMBL" id="AY344294">
    <property type="protein sequence ID" value="AAR04609.1"/>
    <property type="molecule type" value="Genomic_DNA"/>
</dbReference>
<dbReference type="EMBL" id="AY344295">
    <property type="protein sequence ID" value="AAR04610.1"/>
    <property type="molecule type" value="Genomic_DNA"/>
</dbReference>
<dbReference type="EMBL" id="AY344296">
    <property type="protein sequence ID" value="AAR04611.1"/>
    <property type="molecule type" value="Genomic_DNA"/>
</dbReference>
<dbReference type="EMBL" id="AY344297">
    <property type="protein sequence ID" value="AAR04612.1"/>
    <property type="molecule type" value="Genomic_DNA"/>
</dbReference>
<dbReference type="EMBL" id="AY344298">
    <property type="protein sequence ID" value="AAR04613.1"/>
    <property type="molecule type" value="Genomic_DNA"/>
</dbReference>
<dbReference type="EMBL" id="AY344299">
    <property type="protein sequence ID" value="AAR04614.1"/>
    <property type="molecule type" value="Genomic_DNA"/>
</dbReference>
<dbReference type="EMBL" id="AY344300">
    <property type="protein sequence ID" value="AAR04615.1"/>
    <property type="molecule type" value="Genomic_DNA"/>
</dbReference>
<dbReference type="EMBL" id="AY344301">
    <property type="protein sequence ID" value="AAR04616.1"/>
    <property type="molecule type" value="Genomic_DNA"/>
</dbReference>
<dbReference type="EMBL" id="AY344302">
    <property type="protein sequence ID" value="AAR04617.1"/>
    <property type="molecule type" value="Genomic_DNA"/>
</dbReference>
<dbReference type="EMBL" id="AY344303">
    <property type="protein sequence ID" value="AAR04618.1"/>
    <property type="molecule type" value="Genomic_DNA"/>
</dbReference>
<dbReference type="EMBL" id="AY344304">
    <property type="protein sequence ID" value="AAR04619.1"/>
    <property type="molecule type" value="Genomic_DNA"/>
</dbReference>
<dbReference type="EMBL" id="AE014296">
    <property type="protein sequence ID" value="AAF49836.1"/>
    <property type="molecule type" value="Genomic_DNA"/>
</dbReference>
<dbReference type="PIR" id="A28911">
    <property type="entry name" value="A28911"/>
</dbReference>
<dbReference type="RefSeq" id="NP_524057.2">
    <property type="nucleotide sequence ID" value="NM_079333.2"/>
</dbReference>
<dbReference type="PDB" id="2LAQ">
    <property type="method" value="NMR"/>
    <property type="chains" value="A=20-55"/>
</dbReference>
<dbReference type="PDBsum" id="2LAQ"/>
<dbReference type="SMR" id="P05623"/>
<dbReference type="BioGRID" id="64839">
    <property type="interactions" value="3"/>
</dbReference>
<dbReference type="IntAct" id="P05623">
    <property type="interactions" value="1"/>
</dbReference>
<dbReference type="STRING" id="7227.FBpp0075572"/>
<dbReference type="PaxDb" id="7227-FBpp0075572"/>
<dbReference type="GeneID" id="39494"/>
<dbReference type="KEGG" id="dme:Dmel_CG17673"/>
<dbReference type="AGR" id="FB:FBgn0003034"/>
<dbReference type="CTD" id="39494"/>
<dbReference type="FlyBase" id="FBgn0003034">
    <property type="gene designation" value="SP"/>
</dbReference>
<dbReference type="HOGENOM" id="CLU_3034552_0_0_1"/>
<dbReference type="InParanoid" id="P05623"/>
<dbReference type="OrthoDB" id="7840505at2759"/>
<dbReference type="SignaLink" id="P05623"/>
<dbReference type="BioGRID-ORCS" id="39494">
    <property type="hits" value="0 hits in 1 CRISPR screen"/>
</dbReference>
<dbReference type="EvolutionaryTrace" id="P05623"/>
<dbReference type="GenomeRNAi" id="39494"/>
<dbReference type="PRO" id="PR:P05623"/>
<dbReference type="Proteomes" id="UP000000803">
    <property type="component" value="Chromosome 3L"/>
</dbReference>
<dbReference type="GO" id="GO:0005576">
    <property type="term" value="C:extracellular region"/>
    <property type="evidence" value="ECO:0000304"/>
    <property type="project" value="FlyBase"/>
</dbReference>
<dbReference type="GO" id="GO:0005615">
    <property type="term" value="C:extracellular space"/>
    <property type="evidence" value="ECO:0007005"/>
    <property type="project" value="FlyBase"/>
</dbReference>
<dbReference type="GO" id="GO:0001664">
    <property type="term" value="F:G protein-coupled receptor binding"/>
    <property type="evidence" value="ECO:0000353"/>
    <property type="project" value="FlyBase"/>
</dbReference>
<dbReference type="GO" id="GO:0005179">
    <property type="term" value="F:hormone activity"/>
    <property type="evidence" value="ECO:0000303"/>
    <property type="project" value="FlyBase"/>
</dbReference>
<dbReference type="GO" id="GO:0008343">
    <property type="term" value="P:adult feeding behavior"/>
    <property type="evidence" value="ECO:0000315"/>
    <property type="project" value="FlyBase"/>
</dbReference>
<dbReference type="GO" id="GO:0007186">
    <property type="term" value="P:G protein-coupled receptor signaling pathway"/>
    <property type="evidence" value="ECO:0000314"/>
    <property type="project" value="FlyBase"/>
</dbReference>
<dbReference type="GO" id="GO:0044703">
    <property type="term" value="P:multi-organism reproductive process"/>
    <property type="evidence" value="ECO:0000315"/>
    <property type="project" value="FlyBase"/>
</dbReference>
<dbReference type="GO" id="GO:0007621">
    <property type="term" value="P:negative regulation of female receptivity"/>
    <property type="evidence" value="ECO:0000314"/>
    <property type="project" value="FlyBase"/>
</dbReference>
<dbReference type="GO" id="GO:0045434">
    <property type="term" value="P:negative regulation of female receptivity, post-mating"/>
    <property type="evidence" value="ECO:0000315"/>
    <property type="project" value="FlyBase"/>
</dbReference>
<dbReference type="GO" id="GO:0046662">
    <property type="term" value="P:regulation of egg-laying behavior"/>
    <property type="evidence" value="ECO:0000314"/>
    <property type="project" value="FlyBase"/>
</dbReference>
<dbReference type="GO" id="GO:0046008">
    <property type="term" value="P:regulation of female receptivity, post-mating"/>
    <property type="evidence" value="ECO:0000315"/>
    <property type="project" value="FlyBase"/>
</dbReference>
<dbReference type="GO" id="GO:0007557">
    <property type="term" value="P:regulation of juvenile hormone biosynthetic process"/>
    <property type="evidence" value="ECO:0000304"/>
    <property type="project" value="FlyBase"/>
</dbReference>
<dbReference type="GO" id="GO:0019953">
    <property type="term" value="P:sexual reproduction"/>
    <property type="evidence" value="ECO:0007007"/>
    <property type="project" value="FlyBase"/>
</dbReference>
<dbReference type="InterPro" id="IPR012608">
    <property type="entry name" value="Sex_peptide"/>
</dbReference>
<dbReference type="Pfam" id="PF08138">
    <property type="entry name" value="Sex_peptide"/>
    <property type="match status" value="1"/>
</dbReference>
<protein>
    <recommendedName>
        <fullName>Accessory gland-specific peptide 70A</fullName>
    </recommendedName>
    <alternativeName>
        <fullName>Paragonial peptide B</fullName>
    </alternativeName>
    <alternativeName>
        <fullName>Sex peptide</fullName>
        <shortName>SP</shortName>
    </alternativeName>
</protein>
<sequence length="55" mass="6378">MKTLALFLVLVCVLGLVQSWEWPWNRKPTKFPIPSPNPRDKWCRLNLGPAWGGRC</sequence>
<accession>P05623</accession>
<accession>O18659</accession>
<accession>Q6VBF8</accession>
<accession>Q9VU54</accession>
<name>A70A_DROME</name>
<proteinExistence type="evidence at protein level"/>